<comment type="function">
    <text evidence="1">Phosphorylation of dTMP to form dTDP in both de novo and salvage pathways of dTTP synthesis.</text>
</comment>
<comment type="catalytic activity">
    <reaction evidence="1">
        <text>dTMP + ATP = dTDP + ADP</text>
        <dbReference type="Rhea" id="RHEA:13517"/>
        <dbReference type="ChEBI" id="CHEBI:30616"/>
        <dbReference type="ChEBI" id="CHEBI:58369"/>
        <dbReference type="ChEBI" id="CHEBI:63528"/>
        <dbReference type="ChEBI" id="CHEBI:456216"/>
        <dbReference type="EC" id="2.7.4.9"/>
    </reaction>
</comment>
<comment type="similarity">
    <text evidence="1">Belongs to the thymidylate kinase family.</text>
</comment>
<organism>
    <name type="scientific">Leptospira interrogans serogroup Icterohaemorrhagiae serovar copenhageni (strain Fiocruz L1-130)</name>
    <dbReference type="NCBI Taxonomy" id="267671"/>
    <lineage>
        <taxon>Bacteria</taxon>
        <taxon>Pseudomonadati</taxon>
        <taxon>Spirochaetota</taxon>
        <taxon>Spirochaetia</taxon>
        <taxon>Leptospirales</taxon>
        <taxon>Leptospiraceae</taxon>
        <taxon>Leptospira</taxon>
    </lineage>
</organism>
<keyword id="KW-0067">ATP-binding</keyword>
<keyword id="KW-0418">Kinase</keyword>
<keyword id="KW-0545">Nucleotide biosynthesis</keyword>
<keyword id="KW-0547">Nucleotide-binding</keyword>
<keyword id="KW-0808">Transferase</keyword>
<evidence type="ECO:0000255" key="1">
    <source>
        <dbReference type="HAMAP-Rule" id="MF_00165"/>
    </source>
</evidence>
<accession>Q72NL9</accession>
<feature type="chain" id="PRO_0000155294" description="Thymidylate kinase">
    <location>
        <begin position="1"/>
        <end position="204"/>
    </location>
</feature>
<feature type="binding site" evidence="1">
    <location>
        <begin position="13"/>
        <end position="20"/>
    </location>
    <ligand>
        <name>ATP</name>
        <dbReference type="ChEBI" id="CHEBI:30616"/>
    </ligand>
</feature>
<dbReference type="EC" id="2.7.4.9" evidence="1"/>
<dbReference type="EMBL" id="AE016823">
    <property type="protein sequence ID" value="AAS71368.1"/>
    <property type="molecule type" value="Genomic_DNA"/>
</dbReference>
<dbReference type="RefSeq" id="WP_000791380.1">
    <property type="nucleotide sequence ID" value="NC_005823.1"/>
</dbReference>
<dbReference type="SMR" id="Q72NL9"/>
<dbReference type="GeneID" id="61142689"/>
<dbReference type="KEGG" id="lic:LIC_12814"/>
<dbReference type="HOGENOM" id="CLU_049131_0_2_12"/>
<dbReference type="Proteomes" id="UP000007037">
    <property type="component" value="Chromosome I"/>
</dbReference>
<dbReference type="GO" id="GO:0005829">
    <property type="term" value="C:cytosol"/>
    <property type="evidence" value="ECO:0007669"/>
    <property type="project" value="TreeGrafter"/>
</dbReference>
<dbReference type="GO" id="GO:0005524">
    <property type="term" value="F:ATP binding"/>
    <property type="evidence" value="ECO:0007669"/>
    <property type="project" value="UniProtKB-UniRule"/>
</dbReference>
<dbReference type="GO" id="GO:0004798">
    <property type="term" value="F:dTMP kinase activity"/>
    <property type="evidence" value="ECO:0007669"/>
    <property type="project" value="UniProtKB-UniRule"/>
</dbReference>
<dbReference type="GO" id="GO:0006233">
    <property type="term" value="P:dTDP biosynthetic process"/>
    <property type="evidence" value="ECO:0007669"/>
    <property type="project" value="InterPro"/>
</dbReference>
<dbReference type="GO" id="GO:0006235">
    <property type="term" value="P:dTTP biosynthetic process"/>
    <property type="evidence" value="ECO:0007669"/>
    <property type="project" value="UniProtKB-UniRule"/>
</dbReference>
<dbReference type="GO" id="GO:0006227">
    <property type="term" value="P:dUDP biosynthetic process"/>
    <property type="evidence" value="ECO:0007669"/>
    <property type="project" value="TreeGrafter"/>
</dbReference>
<dbReference type="CDD" id="cd01672">
    <property type="entry name" value="TMPK"/>
    <property type="match status" value="1"/>
</dbReference>
<dbReference type="Gene3D" id="3.40.50.300">
    <property type="entry name" value="P-loop containing nucleotide triphosphate hydrolases"/>
    <property type="match status" value="1"/>
</dbReference>
<dbReference type="HAMAP" id="MF_00165">
    <property type="entry name" value="Thymidylate_kinase"/>
    <property type="match status" value="1"/>
</dbReference>
<dbReference type="InterPro" id="IPR027417">
    <property type="entry name" value="P-loop_NTPase"/>
</dbReference>
<dbReference type="InterPro" id="IPR039430">
    <property type="entry name" value="Thymidylate_kin-like_dom"/>
</dbReference>
<dbReference type="InterPro" id="IPR018095">
    <property type="entry name" value="Thymidylate_kin_CS"/>
</dbReference>
<dbReference type="InterPro" id="IPR018094">
    <property type="entry name" value="Thymidylate_kinase"/>
</dbReference>
<dbReference type="NCBIfam" id="TIGR00041">
    <property type="entry name" value="DTMP_kinase"/>
    <property type="match status" value="1"/>
</dbReference>
<dbReference type="PANTHER" id="PTHR10344">
    <property type="entry name" value="THYMIDYLATE KINASE"/>
    <property type="match status" value="1"/>
</dbReference>
<dbReference type="PANTHER" id="PTHR10344:SF4">
    <property type="entry name" value="UMP-CMP KINASE 2, MITOCHONDRIAL"/>
    <property type="match status" value="1"/>
</dbReference>
<dbReference type="Pfam" id="PF02223">
    <property type="entry name" value="Thymidylate_kin"/>
    <property type="match status" value="1"/>
</dbReference>
<dbReference type="SUPFAM" id="SSF52540">
    <property type="entry name" value="P-loop containing nucleoside triphosphate hydrolases"/>
    <property type="match status" value="1"/>
</dbReference>
<dbReference type="PROSITE" id="PS01331">
    <property type="entry name" value="THYMIDYLATE_KINASE"/>
    <property type="match status" value="1"/>
</dbReference>
<gene>
    <name evidence="1" type="primary">tmk</name>
    <name type="ordered locus">LIC_12814</name>
</gene>
<sequence length="204" mass="23421">MKNKKPIFVVFEGIDGSGKSTLCKSLTEKLIELGIPSAAFTEPTNLETGKYLRKFLRGEIELGKEEQIEAFLNDREESLKQNILPALNSDKNVLLDRYMYSTAAYQSGDDLSPEMILKKNLNRNFKIPDLLFYLDLSPSIALERLNRRKEGKERFETLAQLEKIRSAYEKILPKDTIRIDGNKNQNQIVQECLEIFLTNIKSKS</sequence>
<name>KTHY_LEPIC</name>
<reference key="1">
    <citation type="journal article" date="2004" name="J. Bacteriol.">
        <title>Comparative genomics of two Leptospira interrogans serovars reveals novel insights into physiology and pathogenesis.</title>
        <authorList>
            <person name="Nascimento A.L.T.O."/>
            <person name="Ko A.I."/>
            <person name="Martins E.A.L."/>
            <person name="Monteiro-Vitorello C.B."/>
            <person name="Ho P.L."/>
            <person name="Haake D.A."/>
            <person name="Verjovski-Almeida S."/>
            <person name="Hartskeerl R.A."/>
            <person name="Marques M.V."/>
            <person name="Oliveira M.C."/>
            <person name="Menck C.F.M."/>
            <person name="Leite L.C.C."/>
            <person name="Carrer H."/>
            <person name="Coutinho L.L."/>
            <person name="Degrave W.M."/>
            <person name="Dellagostin O.A."/>
            <person name="El-Dorry H."/>
            <person name="Ferro E.S."/>
            <person name="Ferro M.I.T."/>
            <person name="Furlan L.R."/>
            <person name="Gamberini M."/>
            <person name="Giglioti E.A."/>
            <person name="Goes-Neto A."/>
            <person name="Goldman G.H."/>
            <person name="Goldman M.H.S."/>
            <person name="Harakava R."/>
            <person name="Jeronimo S.M.B."/>
            <person name="Junqueira-de-Azevedo I.L.M."/>
            <person name="Kimura E.T."/>
            <person name="Kuramae E.E."/>
            <person name="Lemos E.G.M."/>
            <person name="Lemos M.V.F."/>
            <person name="Marino C.L."/>
            <person name="Nunes L.R."/>
            <person name="de Oliveira R.C."/>
            <person name="Pereira G.G."/>
            <person name="Reis M.S."/>
            <person name="Schriefer A."/>
            <person name="Siqueira W.J."/>
            <person name="Sommer P."/>
            <person name="Tsai S.M."/>
            <person name="Simpson A.J.G."/>
            <person name="Ferro J.A."/>
            <person name="Camargo L.E.A."/>
            <person name="Kitajima J.P."/>
            <person name="Setubal J.C."/>
            <person name="Van Sluys M.A."/>
        </authorList>
    </citation>
    <scope>NUCLEOTIDE SEQUENCE [LARGE SCALE GENOMIC DNA]</scope>
    <source>
        <strain>Fiocruz L1-130</strain>
    </source>
</reference>
<proteinExistence type="inferred from homology"/>
<protein>
    <recommendedName>
        <fullName evidence="1">Thymidylate kinase</fullName>
        <ecNumber evidence="1">2.7.4.9</ecNumber>
    </recommendedName>
    <alternativeName>
        <fullName evidence="1">dTMP kinase</fullName>
    </alternativeName>
</protein>